<sequence length="341" mass="35600">MYTLARQLLFKLSPETSHDLSLDLIGAGGRLGLNGMLCKQPAALPVSVMGLNFANPVGLAAGLDKNGAAIDGFAQLGFGFVEIGTVTPRPQPGNPKPRLFRLPEATAIINRMGFNNLGVDHLLERVRAARYNGVLGINIGKNFDTPVERAVDDYLICLDKVYTAASYITVNVSSPNTPGLRSLQFGDSLKQLLDALAERREQLAVTHGKRVPLAIKIAPDMSDEETALVAAALMASGMDAVIATNTTLGREGVEALPHGGEAGGLSGAPVLAKSTHIVKVLAGELGGKLPIIAAGGITEGRHAAEKIAAGASLVQIYSGFIYKGPALIREAVDAIAAMPRV</sequence>
<keyword id="KW-1003">Cell membrane</keyword>
<keyword id="KW-0285">Flavoprotein</keyword>
<keyword id="KW-0288">FMN</keyword>
<keyword id="KW-0472">Membrane</keyword>
<keyword id="KW-0560">Oxidoreductase</keyword>
<keyword id="KW-0665">Pyrimidine biosynthesis</keyword>
<accession>B0KG90</accession>
<comment type="function">
    <text evidence="1">Catalyzes the conversion of dihydroorotate to orotate with quinone as electron acceptor.</text>
</comment>
<comment type="catalytic activity">
    <reaction evidence="1">
        <text>(S)-dihydroorotate + a quinone = orotate + a quinol</text>
        <dbReference type="Rhea" id="RHEA:30187"/>
        <dbReference type="ChEBI" id="CHEBI:24646"/>
        <dbReference type="ChEBI" id="CHEBI:30839"/>
        <dbReference type="ChEBI" id="CHEBI:30864"/>
        <dbReference type="ChEBI" id="CHEBI:132124"/>
        <dbReference type="EC" id="1.3.5.2"/>
    </reaction>
</comment>
<comment type="cofactor">
    <cofactor evidence="1">
        <name>FMN</name>
        <dbReference type="ChEBI" id="CHEBI:58210"/>
    </cofactor>
    <text evidence="1">Binds 1 FMN per subunit.</text>
</comment>
<comment type="pathway">
    <text evidence="1">Pyrimidine metabolism; UMP biosynthesis via de novo pathway; orotate from (S)-dihydroorotate (quinone route): step 1/1.</text>
</comment>
<comment type="subunit">
    <text evidence="1">Monomer.</text>
</comment>
<comment type="subcellular location">
    <subcellularLocation>
        <location evidence="1">Cell membrane</location>
        <topology evidence="1">Peripheral membrane protein</topology>
    </subcellularLocation>
</comment>
<comment type="similarity">
    <text evidence="1">Belongs to the dihydroorotate dehydrogenase family. Type 2 subfamily.</text>
</comment>
<protein>
    <recommendedName>
        <fullName evidence="1">Dihydroorotate dehydrogenase (quinone)</fullName>
        <ecNumber evidence="1">1.3.5.2</ecNumber>
    </recommendedName>
    <alternativeName>
        <fullName evidence="1">DHOdehase</fullName>
        <shortName evidence="1">DHOD</shortName>
        <shortName evidence="1">DHODase</shortName>
    </alternativeName>
    <alternativeName>
        <fullName evidence="1">Dihydroorotate oxidase</fullName>
    </alternativeName>
</protein>
<dbReference type="EC" id="1.3.5.2" evidence="1"/>
<dbReference type="EMBL" id="CP000926">
    <property type="protein sequence ID" value="ABY97511.1"/>
    <property type="molecule type" value="Genomic_DNA"/>
</dbReference>
<dbReference type="RefSeq" id="WP_012271276.1">
    <property type="nucleotide sequence ID" value="NC_010322.1"/>
</dbReference>
<dbReference type="SMR" id="B0KG90"/>
<dbReference type="KEGG" id="ppg:PputGB1_1606"/>
<dbReference type="eggNOG" id="COG0167">
    <property type="taxonomic scope" value="Bacteria"/>
</dbReference>
<dbReference type="HOGENOM" id="CLU_013640_2_0_6"/>
<dbReference type="UniPathway" id="UPA00070">
    <property type="reaction ID" value="UER00946"/>
</dbReference>
<dbReference type="Proteomes" id="UP000002157">
    <property type="component" value="Chromosome"/>
</dbReference>
<dbReference type="GO" id="GO:0005737">
    <property type="term" value="C:cytoplasm"/>
    <property type="evidence" value="ECO:0007669"/>
    <property type="project" value="InterPro"/>
</dbReference>
<dbReference type="GO" id="GO:0005886">
    <property type="term" value="C:plasma membrane"/>
    <property type="evidence" value="ECO:0007669"/>
    <property type="project" value="UniProtKB-SubCell"/>
</dbReference>
<dbReference type="GO" id="GO:0106430">
    <property type="term" value="F:dihydroorotate dehydrogenase (quinone) activity"/>
    <property type="evidence" value="ECO:0007669"/>
    <property type="project" value="UniProtKB-EC"/>
</dbReference>
<dbReference type="GO" id="GO:0006207">
    <property type="term" value="P:'de novo' pyrimidine nucleobase biosynthetic process"/>
    <property type="evidence" value="ECO:0007669"/>
    <property type="project" value="InterPro"/>
</dbReference>
<dbReference type="GO" id="GO:0044205">
    <property type="term" value="P:'de novo' UMP biosynthetic process"/>
    <property type="evidence" value="ECO:0007669"/>
    <property type="project" value="UniProtKB-UniRule"/>
</dbReference>
<dbReference type="CDD" id="cd04738">
    <property type="entry name" value="DHOD_2_like"/>
    <property type="match status" value="1"/>
</dbReference>
<dbReference type="FunFam" id="3.20.20.70:FF:000028">
    <property type="entry name" value="Dihydroorotate dehydrogenase (quinone)"/>
    <property type="match status" value="1"/>
</dbReference>
<dbReference type="Gene3D" id="3.20.20.70">
    <property type="entry name" value="Aldolase class I"/>
    <property type="match status" value="1"/>
</dbReference>
<dbReference type="HAMAP" id="MF_00225">
    <property type="entry name" value="DHO_dh_type2"/>
    <property type="match status" value="1"/>
</dbReference>
<dbReference type="InterPro" id="IPR013785">
    <property type="entry name" value="Aldolase_TIM"/>
</dbReference>
<dbReference type="InterPro" id="IPR050074">
    <property type="entry name" value="DHO_dehydrogenase"/>
</dbReference>
<dbReference type="InterPro" id="IPR012135">
    <property type="entry name" value="Dihydroorotate_DH_1_2"/>
</dbReference>
<dbReference type="InterPro" id="IPR005719">
    <property type="entry name" value="Dihydroorotate_DH_2"/>
</dbReference>
<dbReference type="InterPro" id="IPR005720">
    <property type="entry name" value="Dihydroorotate_DH_cat"/>
</dbReference>
<dbReference type="InterPro" id="IPR001295">
    <property type="entry name" value="Dihydroorotate_DH_CS"/>
</dbReference>
<dbReference type="NCBIfam" id="NF003644">
    <property type="entry name" value="PRK05286.1-1"/>
    <property type="match status" value="1"/>
</dbReference>
<dbReference type="NCBIfam" id="NF003645">
    <property type="entry name" value="PRK05286.1-2"/>
    <property type="match status" value="1"/>
</dbReference>
<dbReference type="NCBIfam" id="NF003646">
    <property type="entry name" value="PRK05286.1-4"/>
    <property type="match status" value="1"/>
</dbReference>
<dbReference type="NCBIfam" id="NF003652">
    <property type="entry name" value="PRK05286.2-5"/>
    <property type="match status" value="1"/>
</dbReference>
<dbReference type="NCBIfam" id="TIGR01036">
    <property type="entry name" value="pyrD_sub2"/>
    <property type="match status" value="1"/>
</dbReference>
<dbReference type="PANTHER" id="PTHR48109:SF4">
    <property type="entry name" value="DIHYDROOROTATE DEHYDROGENASE (QUINONE), MITOCHONDRIAL"/>
    <property type="match status" value="1"/>
</dbReference>
<dbReference type="PANTHER" id="PTHR48109">
    <property type="entry name" value="DIHYDROOROTATE DEHYDROGENASE (QUINONE), MITOCHONDRIAL-RELATED"/>
    <property type="match status" value="1"/>
</dbReference>
<dbReference type="Pfam" id="PF01180">
    <property type="entry name" value="DHO_dh"/>
    <property type="match status" value="1"/>
</dbReference>
<dbReference type="PIRSF" id="PIRSF000164">
    <property type="entry name" value="DHO_oxidase"/>
    <property type="match status" value="1"/>
</dbReference>
<dbReference type="SUPFAM" id="SSF51395">
    <property type="entry name" value="FMN-linked oxidoreductases"/>
    <property type="match status" value="1"/>
</dbReference>
<dbReference type="PROSITE" id="PS00911">
    <property type="entry name" value="DHODEHASE_1"/>
    <property type="match status" value="1"/>
</dbReference>
<feature type="chain" id="PRO_1000078162" description="Dihydroorotate dehydrogenase (quinone)">
    <location>
        <begin position="1"/>
        <end position="341"/>
    </location>
</feature>
<feature type="active site" description="Nucleophile" evidence="1">
    <location>
        <position position="174"/>
    </location>
</feature>
<feature type="binding site" evidence="1">
    <location>
        <begin position="61"/>
        <end position="65"/>
    </location>
    <ligand>
        <name>FMN</name>
        <dbReference type="ChEBI" id="CHEBI:58210"/>
    </ligand>
</feature>
<feature type="binding site" evidence="1">
    <location>
        <position position="65"/>
    </location>
    <ligand>
        <name>substrate</name>
    </ligand>
</feature>
<feature type="binding site" evidence="1">
    <location>
        <position position="85"/>
    </location>
    <ligand>
        <name>FMN</name>
        <dbReference type="ChEBI" id="CHEBI:58210"/>
    </ligand>
</feature>
<feature type="binding site" evidence="1">
    <location>
        <begin position="110"/>
        <end position="114"/>
    </location>
    <ligand>
        <name>substrate</name>
    </ligand>
</feature>
<feature type="binding site" evidence="1">
    <location>
        <position position="138"/>
    </location>
    <ligand>
        <name>FMN</name>
        <dbReference type="ChEBI" id="CHEBI:58210"/>
    </ligand>
</feature>
<feature type="binding site" evidence="1">
    <location>
        <position position="171"/>
    </location>
    <ligand>
        <name>FMN</name>
        <dbReference type="ChEBI" id="CHEBI:58210"/>
    </ligand>
</feature>
<feature type="binding site" evidence="1">
    <location>
        <position position="171"/>
    </location>
    <ligand>
        <name>substrate</name>
    </ligand>
</feature>
<feature type="binding site" evidence="1">
    <location>
        <position position="176"/>
    </location>
    <ligand>
        <name>substrate</name>
    </ligand>
</feature>
<feature type="binding site" evidence="1">
    <location>
        <position position="216"/>
    </location>
    <ligand>
        <name>FMN</name>
        <dbReference type="ChEBI" id="CHEBI:58210"/>
    </ligand>
</feature>
<feature type="binding site" evidence="1">
    <location>
        <position position="244"/>
    </location>
    <ligand>
        <name>FMN</name>
        <dbReference type="ChEBI" id="CHEBI:58210"/>
    </ligand>
</feature>
<feature type="binding site" evidence="1">
    <location>
        <begin position="245"/>
        <end position="246"/>
    </location>
    <ligand>
        <name>substrate</name>
    </ligand>
</feature>
<feature type="binding site" evidence="1">
    <location>
        <position position="267"/>
    </location>
    <ligand>
        <name>FMN</name>
        <dbReference type="ChEBI" id="CHEBI:58210"/>
    </ligand>
</feature>
<feature type="binding site" evidence="1">
    <location>
        <position position="296"/>
    </location>
    <ligand>
        <name>FMN</name>
        <dbReference type="ChEBI" id="CHEBI:58210"/>
    </ligand>
</feature>
<feature type="binding site" evidence="1">
    <location>
        <begin position="317"/>
        <end position="318"/>
    </location>
    <ligand>
        <name>FMN</name>
        <dbReference type="ChEBI" id="CHEBI:58210"/>
    </ligand>
</feature>
<name>PYRD_PSEPG</name>
<proteinExistence type="inferred from homology"/>
<evidence type="ECO:0000255" key="1">
    <source>
        <dbReference type="HAMAP-Rule" id="MF_00225"/>
    </source>
</evidence>
<organism>
    <name type="scientific">Pseudomonas putida (strain GB-1)</name>
    <dbReference type="NCBI Taxonomy" id="76869"/>
    <lineage>
        <taxon>Bacteria</taxon>
        <taxon>Pseudomonadati</taxon>
        <taxon>Pseudomonadota</taxon>
        <taxon>Gammaproteobacteria</taxon>
        <taxon>Pseudomonadales</taxon>
        <taxon>Pseudomonadaceae</taxon>
        <taxon>Pseudomonas</taxon>
    </lineage>
</organism>
<gene>
    <name evidence="1" type="primary">pyrD</name>
    <name type="ordered locus">PputGB1_1606</name>
</gene>
<reference key="1">
    <citation type="submission" date="2008-01" db="EMBL/GenBank/DDBJ databases">
        <title>Complete sequence of Pseudomonas putida GB-1.</title>
        <authorList>
            <consortium name="US DOE Joint Genome Institute"/>
            <person name="Copeland A."/>
            <person name="Lucas S."/>
            <person name="Lapidus A."/>
            <person name="Barry K."/>
            <person name="Glavina del Rio T."/>
            <person name="Dalin E."/>
            <person name="Tice H."/>
            <person name="Pitluck S."/>
            <person name="Bruce D."/>
            <person name="Goodwin L."/>
            <person name="Chertkov O."/>
            <person name="Brettin T."/>
            <person name="Detter J.C."/>
            <person name="Han C."/>
            <person name="Kuske C.R."/>
            <person name="Schmutz J."/>
            <person name="Larimer F."/>
            <person name="Land M."/>
            <person name="Hauser L."/>
            <person name="Kyrpides N."/>
            <person name="Kim E."/>
            <person name="McCarthy J.K."/>
            <person name="Richardson P."/>
        </authorList>
    </citation>
    <scope>NUCLEOTIDE SEQUENCE [LARGE SCALE GENOMIC DNA]</scope>
    <source>
        <strain>GB-1</strain>
    </source>
</reference>